<name>MAOM_MOUSE</name>
<reference key="1">
    <citation type="journal article" date="2005" name="Science">
        <title>The transcriptional landscape of the mammalian genome.</title>
        <authorList>
            <person name="Carninci P."/>
            <person name="Kasukawa T."/>
            <person name="Katayama S."/>
            <person name="Gough J."/>
            <person name="Frith M.C."/>
            <person name="Maeda N."/>
            <person name="Oyama R."/>
            <person name="Ravasi T."/>
            <person name="Lenhard B."/>
            <person name="Wells C."/>
            <person name="Kodzius R."/>
            <person name="Shimokawa K."/>
            <person name="Bajic V.B."/>
            <person name="Brenner S.E."/>
            <person name="Batalov S."/>
            <person name="Forrest A.R."/>
            <person name="Zavolan M."/>
            <person name="Davis M.J."/>
            <person name="Wilming L.G."/>
            <person name="Aidinis V."/>
            <person name="Allen J.E."/>
            <person name="Ambesi-Impiombato A."/>
            <person name="Apweiler R."/>
            <person name="Aturaliya R.N."/>
            <person name="Bailey T.L."/>
            <person name="Bansal M."/>
            <person name="Baxter L."/>
            <person name="Beisel K.W."/>
            <person name="Bersano T."/>
            <person name="Bono H."/>
            <person name="Chalk A.M."/>
            <person name="Chiu K.P."/>
            <person name="Choudhary V."/>
            <person name="Christoffels A."/>
            <person name="Clutterbuck D.R."/>
            <person name="Crowe M.L."/>
            <person name="Dalla E."/>
            <person name="Dalrymple B.P."/>
            <person name="de Bono B."/>
            <person name="Della Gatta G."/>
            <person name="di Bernardo D."/>
            <person name="Down T."/>
            <person name="Engstrom P."/>
            <person name="Fagiolini M."/>
            <person name="Faulkner G."/>
            <person name="Fletcher C.F."/>
            <person name="Fukushima T."/>
            <person name="Furuno M."/>
            <person name="Futaki S."/>
            <person name="Gariboldi M."/>
            <person name="Georgii-Hemming P."/>
            <person name="Gingeras T.R."/>
            <person name="Gojobori T."/>
            <person name="Green R.E."/>
            <person name="Gustincich S."/>
            <person name="Harbers M."/>
            <person name="Hayashi Y."/>
            <person name="Hensch T.K."/>
            <person name="Hirokawa N."/>
            <person name="Hill D."/>
            <person name="Huminiecki L."/>
            <person name="Iacono M."/>
            <person name="Ikeo K."/>
            <person name="Iwama A."/>
            <person name="Ishikawa T."/>
            <person name="Jakt M."/>
            <person name="Kanapin A."/>
            <person name="Katoh M."/>
            <person name="Kawasawa Y."/>
            <person name="Kelso J."/>
            <person name="Kitamura H."/>
            <person name="Kitano H."/>
            <person name="Kollias G."/>
            <person name="Krishnan S.P."/>
            <person name="Kruger A."/>
            <person name="Kummerfeld S.K."/>
            <person name="Kurochkin I.V."/>
            <person name="Lareau L.F."/>
            <person name="Lazarevic D."/>
            <person name="Lipovich L."/>
            <person name="Liu J."/>
            <person name="Liuni S."/>
            <person name="McWilliam S."/>
            <person name="Madan Babu M."/>
            <person name="Madera M."/>
            <person name="Marchionni L."/>
            <person name="Matsuda H."/>
            <person name="Matsuzawa S."/>
            <person name="Miki H."/>
            <person name="Mignone F."/>
            <person name="Miyake S."/>
            <person name="Morris K."/>
            <person name="Mottagui-Tabar S."/>
            <person name="Mulder N."/>
            <person name="Nakano N."/>
            <person name="Nakauchi H."/>
            <person name="Ng P."/>
            <person name="Nilsson R."/>
            <person name="Nishiguchi S."/>
            <person name="Nishikawa S."/>
            <person name="Nori F."/>
            <person name="Ohara O."/>
            <person name="Okazaki Y."/>
            <person name="Orlando V."/>
            <person name="Pang K.C."/>
            <person name="Pavan W.J."/>
            <person name="Pavesi G."/>
            <person name="Pesole G."/>
            <person name="Petrovsky N."/>
            <person name="Piazza S."/>
            <person name="Reed J."/>
            <person name="Reid J.F."/>
            <person name="Ring B.Z."/>
            <person name="Ringwald M."/>
            <person name="Rost B."/>
            <person name="Ruan Y."/>
            <person name="Salzberg S.L."/>
            <person name="Sandelin A."/>
            <person name="Schneider C."/>
            <person name="Schoenbach C."/>
            <person name="Sekiguchi K."/>
            <person name="Semple C.A."/>
            <person name="Seno S."/>
            <person name="Sessa L."/>
            <person name="Sheng Y."/>
            <person name="Shibata Y."/>
            <person name="Shimada H."/>
            <person name="Shimada K."/>
            <person name="Silva D."/>
            <person name="Sinclair B."/>
            <person name="Sperling S."/>
            <person name="Stupka E."/>
            <person name="Sugiura K."/>
            <person name="Sultana R."/>
            <person name="Takenaka Y."/>
            <person name="Taki K."/>
            <person name="Tammoja K."/>
            <person name="Tan S.L."/>
            <person name="Tang S."/>
            <person name="Taylor M.S."/>
            <person name="Tegner J."/>
            <person name="Teichmann S.A."/>
            <person name="Ueda H.R."/>
            <person name="van Nimwegen E."/>
            <person name="Verardo R."/>
            <person name="Wei C.L."/>
            <person name="Yagi K."/>
            <person name="Yamanishi H."/>
            <person name="Zabarovsky E."/>
            <person name="Zhu S."/>
            <person name="Zimmer A."/>
            <person name="Hide W."/>
            <person name="Bult C."/>
            <person name="Grimmond S.M."/>
            <person name="Teasdale R.D."/>
            <person name="Liu E.T."/>
            <person name="Brusic V."/>
            <person name="Quackenbush J."/>
            <person name="Wahlestedt C."/>
            <person name="Mattick J.S."/>
            <person name="Hume D.A."/>
            <person name="Kai C."/>
            <person name="Sasaki D."/>
            <person name="Tomaru Y."/>
            <person name="Fukuda S."/>
            <person name="Kanamori-Katayama M."/>
            <person name="Suzuki M."/>
            <person name="Aoki J."/>
            <person name="Arakawa T."/>
            <person name="Iida J."/>
            <person name="Imamura K."/>
            <person name="Itoh M."/>
            <person name="Kato T."/>
            <person name="Kawaji H."/>
            <person name="Kawagashira N."/>
            <person name="Kawashima T."/>
            <person name="Kojima M."/>
            <person name="Kondo S."/>
            <person name="Konno H."/>
            <person name="Nakano K."/>
            <person name="Ninomiya N."/>
            <person name="Nishio T."/>
            <person name="Okada M."/>
            <person name="Plessy C."/>
            <person name="Shibata K."/>
            <person name="Shiraki T."/>
            <person name="Suzuki S."/>
            <person name="Tagami M."/>
            <person name="Waki K."/>
            <person name="Watahiki A."/>
            <person name="Okamura-Oho Y."/>
            <person name="Suzuki H."/>
            <person name="Kawai J."/>
            <person name="Hayashizaki Y."/>
        </authorList>
    </citation>
    <scope>NUCLEOTIDE SEQUENCE [LARGE SCALE MRNA]</scope>
    <source>
        <strain>C57BL/6J</strain>
        <strain>NOD</strain>
        <tissue>Spleen</tissue>
        <tissue>Thymus</tissue>
    </source>
</reference>
<reference key="2">
    <citation type="journal article" date="2004" name="Genome Res.">
        <title>The status, quality, and expansion of the NIH full-length cDNA project: the Mammalian Gene Collection (MGC).</title>
        <authorList>
            <consortium name="The MGC Project Team"/>
        </authorList>
    </citation>
    <scope>NUCLEOTIDE SEQUENCE [LARGE SCALE MRNA]</scope>
    <source>
        <strain>FVB/N</strain>
        <tissue>Mammary tumor</tissue>
    </source>
</reference>
<reference key="3">
    <citation type="journal article" date="2010" name="Cell">
        <title>A tissue-specific atlas of mouse protein phosphorylation and expression.</title>
        <authorList>
            <person name="Huttlin E.L."/>
            <person name="Jedrychowski M.P."/>
            <person name="Elias J.E."/>
            <person name="Goswami T."/>
            <person name="Rad R."/>
            <person name="Beausoleil S.A."/>
            <person name="Villen J."/>
            <person name="Haas W."/>
            <person name="Sowa M.E."/>
            <person name="Gygi S.P."/>
        </authorList>
    </citation>
    <scope>IDENTIFICATION BY MASS SPECTROMETRY [LARGE SCALE ANALYSIS]</scope>
    <source>
        <tissue>Brain</tissue>
        <tissue>Brown adipose tissue</tissue>
        <tissue>Kidney</tissue>
        <tissue>Lung</tissue>
        <tissue>Pancreas</tissue>
        <tissue>Spleen</tissue>
        <tissue>Testis</tissue>
    </source>
</reference>
<comment type="function">
    <text evidence="1">NAD-dependent mitochondrial malic enzyme that catalyzes the oxidative decarboxylation of malate to pyruvate.</text>
</comment>
<comment type="catalytic activity">
    <reaction evidence="1">
        <text>(S)-malate + NAD(+) = pyruvate + CO2 + NADH</text>
        <dbReference type="Rhea" id="RHEA:12653"/>
        <dbReference type="ChEBI" id="CHEBI:15361"/>
        <dbReference type="ChEBI" id="CHEBI:15589"/>
        <dbReference type="ChEBI" id="CHEBI:16526"/>
        <dbReference type="ChEBI" id="CHEBI:57540"/>
        <dbReference type="ChEBI" id="CHEBI:57945"/>
        <dbReference type="EC" id="1.1.1.38"/>
    </reaction>
</comment>
<comment type="catalytic activity">
    <reaction evidence="1">
        <text>oxaloacetate + H(+) = pyruvate + CO2</text>
        <dbReference type="Rhea" id="RHEA:15641"/>
        <dbReference type="ChEBI" id="CHEBI:15361"/>
        <dbReference type="ChEBI" id="CHEBI:15378"/>
        <dbReference type="ChEBI" id="CHEBI:16452"/>
        <dbReference type="ChEBI" id="CHEBI:16526"/>
        <dbReference type="EC" id="1.1.1.38"/>
    </reaction>
</comment>
<comment type="cofactor">
    <cofactor evidence="1">
        <name>Mg(2+)</name>
        <dbReference type="ChEBI" id="CHEBI:18420"/>
    </cofactor>
    <cofactor evidence="1">
        <name>Mn(2+)</name>
        <dbReference type="ChEBI" id="CHEBI:29035"/>
    </cofactor>
    <text evidence="1">Divalent metal cations. Prefers magnesium or manganese.</text>
</comment>
<comment type="activity regulation">
    <text evidence="1">Subject to allosteric activation by fumarate.</text>
</comment>
<comment type="subunit">
    <text evidence="1">Homotetramer.</text>
</comment>
<comment type="subcellular location">
    <subcellularLocation>
        <location evidence="1">Mitochondrion matrix</location>
    </subcellularLocation>
</comment>
<comment type="miscellaneous">
    <text evidence="1">This isoenzyme can also use NADP(+) but is more effective with NAD(+).</text>
</comment>
<comment type="similarity">
    <text evidence="2">Belongs to the malic enzymes family.</text>
</comment>
<accession>Q99KE1</accession>
<accession>Q3TBM8</accession>
<sequence>MFSRLRAVTTPCTLTCRRVHLKEKGKPLMLNPRTNKGMAFTLQERQMLGLQGLLPPKIETQDIQALRFHRNLKKMTSPLEKYIYIMGIQERNEKLFYRILQDDIESLMPIVYTPTVGLACCQYGHIFRRPKGLFISISDRGHVRSIVDNWPENHVKAVVVTDGERILGLGDLGVYGMGIPVGKLCLYTACAGIQPEKCLPVCIDVGTDNMALLKDPFYMGLYQKRDRSQLYDDLMDEFMKAITDRYGRNTLIQFEDFGNHNAFRFLRKYQQKYCTFNDDIQGTAAVALSGLLAAQRVINKPVSEHKILFLGAGEAALGIANLIVLSMVESGLSEEEAQRKIWMFDKSGLLVKGRTASIDSNQEPYAHAAPESIPATFEDAVNKLKPSVIIGVAGAGPLFTHGVIKAMASINERPIIFALSNPTAQAECTAEDAYTLTEGRCLFASGSPFEPVKLQDGRVFTPGQGNNAYIFPGVALAVILCEARHISDTVFLEAAKALTTQLTDAELAQGRLYPSLANIQEVSANIAIKLAEYLYANKMAFRYPEPEDKARYVRERIWRSNYVSLLPDVYDWPESSLTPPQITEEKLPH</sequence>
<gene>
    <name type="primary">Me2</name>
</gene>
<protein>
    <recommendedName>
        <fullName>NAD-dependent malic enzyme, mitochondrial</fullName>
        <shortName>NAD-ME</shortName>
        <ecNumber evidence="1">1.1.1.38</ecNumber>
    </recommendedName>
    <alternativeName>
        <fullName>Malic enzyme 2</fullName>
    </alternativeName>
</protein>
<evidence type="ECO:0000250" key="1">
    <source>
        <dbReference type="UniProtKB" id="P23368"/>
    </source>
</evidence>
<evidence type="ECO:0000305" key="2"/>
<feature type="transit peptide" description="Mitochondrion" evidence="1">
    <location>
        <begin position="1"/>
        <end position="18"/>
    </location>
</feature>
<feature type="chain" id="PRO_0000018538" description="NAD-dependent malic enzyme, mitochondrial">
    <location>
        <begin position="19"/>
        <end position="589"/>
    </location>
</feature>
<feature type="active site" description="Proton donor" evidence="1">
    <location>
        <position position="112"/>
    </location>
</feature>
<feature type="active site" description="Proton acceptor" evidence="1">
    <location>
        <position position="183"/>
    </location>
</feature>
<feature type="binding site" evidence="1">
    <location>
        <position position="67"/>
    </location>
    <ligand>
        <name>fumarate</name>
        <dbReference type="ChEBI" id="CHEBI:29806"/>
        <note>allosteric activator</note>
    </ligand>
</feature>
<feature type="binding site" evidence="1">
    <location>
        <position position="91"/>
    </location>
    <ligand>
        <name>fumarate</name>
        <dbReference type="ChEBI" id="CHEBI:29806"/>
        <note>allosteric activator</note>
    </ligand>
</feature>
<feature type="binding site" evidence="1">
    <location>
        <position position="165"/>
    </location>
    <ligand>
        <name>(S)-malate</name>
        <dbReference type="ChEBI" id="CHEBI:15589"/>
    </ligand>
</feature>
<feature type="binding site" evidence="1">
    <location>
        <position position="165"/>
    </location>
    <ligand>
        <name>NAD(+)</name>
        <dbReference type="ChEBI" id="CHEBI:57540"/>
    </ligand>
</feature>
<feature type="binding site" evidence="1">
    <location>
        <position position="255"/>
    </location>
    <ligand>
        <name>a divalent metal cation</name>
        <dbReference type="ChEBI" id="CHEBI:60240"/>
    </ligand>
</feature>
<feature type="binding site" evidence="1">
    <location>
        <position position="256"/>
    </location>
    <ligand>
        <name>a divalent metal cation</name>
        <dbReference type="ChEBI" id="CHEBI:60240"/>
    </ligand>
</feature>
<feature type="binding site" evidence="1">
    <location>
        <position position="259"/>
    </location>
    <ligand>
        <name>NAD(+)</name>
        <dbReference type="ChEBI" id="CHEBI:57540"/>
    </ligand>
</feature>
<feature type="binding site" evidence="1">
    <location>
        <position position="279"/>
    </location>
    <ligand>
        <name>a divalent metal cation</name>
        <dbReference type="ChEBI" id="CHEBI:60240"/>
    </ligand>
</feature>
<feature type="binding site" evidence="1">
    <location>
        <position position="312"/>
    </location>
    <ligand>
        <name>NAD(+)</name>
        <dbReference type="ChEBI" id="CHEBI:57540"/>
    </ligand>
</feature>
<feature type="binding site" evidence="1">
    <location>
        <position position="314"/>
    </location>
    <ligand>
        <name>NAD(+)</name>
        <dbReference type="ChEBI" id="CHEBI:57540"/>
    </ligand>
</feature>
<feature type="binding site" evidence="1">
    <location>
        <position position="315"/>
    </location>
    <ligand>
        <name>NAD(+)</name>
        <dbReference type="ChEBI" id="CHEBI:57540"/>
    </ligand>
</feature>
<feature type="binding site" evidence="1">
    <location>
        <position position="421"/>
    </location>
    <ligand>
        <name>(S)-malate</name>
        <dbReference type="ChEBI" id="CHEBI:15589"/>
    </ligand>
</feature>
<feature type="binding site" evidence="1">
    <location>
        <position position="466"/>
    </location>
    <ligand>
        <name>(S)-malate</name>
        <dbReference type="ChEBI" id="CHEBI:15589"/>
    </ligand>
</feature>
<feature type="modified residue" description="N6-acetyllysine" evidence="1">
    <location>
        <position position="156"/>
    </location>
</feature>
<feature type="modified residue" description="N6-acetyllysine" evidence="1">
    <location>
        <position position="224"/>
    </location>
</feature>
<feature type="modified residue" description="N6-acetyllysine" evidence="1">
    <location>
        <position position="240"/>
    </location>
</feature>
<feature type="modified residue" description="N6-acetyllysine" evidence="1">
    <location>
        <position position="272"/>
    </location>
</feature>
<feature type="modified residue" description="N6-acetyllysine" evidence="1">
    <location>
        <position position="346"/>
    </location>
</feature>
<proteinExistence type="evidence at protein level"/>
<organism>
    <name type="scientific">Mus musculus</name>
    <name type="common">Mouse</name>
    <dbReference type="NCBI Taxonomy" id="10090"/>
    <lineage>
        <taxon>Eukaryota</taxon>
        <taxon>Metazoa</taxon>
        <taxon>Chordata</taxon>
        <taxon>Craniata</taxon>
        <taxon>Vertebrata</taxon>
        <taxon>Euteleostomi</taxon>
        <taxon>Mammalia</taxon>
        <taxon>Eutheria</taxon>
        <taxon>Euarchontoglires</taxon>
        <taxon>Glires</taxon>
        <taxon>Rodentia</taxon>
        <taxon>Myomorpha</taxon>
        <taxon>Muroidea</taxon>
        <taxon>Muridae</taxon>
        <taxon>Murinae</taxon>
        <taxon>Mus</taxon>
        <taxon>Mus</taxon>
    </lineage>
</organism>
<keyword id="KW-0007">Acetylation</keyword>
<keyword id="KW-0021">Allosteric enzyme</keyword>
<keyword id="KW-0479">Metal-binding</keyword>
<keyword id="KW-0496">Mitochondrion</keyword>
<keyword id="KW-0520">NAD</keyword>
<keyword id="KW-0560">Oxidoreductase</keyword>
<keyword id="KW-1185">Reference proteome</keyword>
<keyword id="KW-0809">Transit peptide</keyword>
<dbReference type="EC" id="1.1.1.38" evidence="1"/>
<dbReference type="EMBL" id="AK042289">
    <property type="protein sequence ID" value="BAC31216.1"/>
    <property type="molecule type" value="mRNA"/>
</dbReference>
<dbReference type="EMBL" id="AK050933">
    <property type="protein sequence ID" value="BAC34467.1"/>
    <property type="molecule type" value="mRNA"/>
</dbReference>
<dbReference type="EMBL" id="AK050980">
    <property type="protein sequence ID" value="BAC34483.1"/>
    <property type="molecule type" value="mRNA"/>
</dbReference>
<dbReference type="EMBL" id="AK156403">
    <property type="protein sequence ID" value="BAE33701.1"/>
    <property type="molecule type" value="mRNA"/>
</dbReference>
<dbReference type="EMBL" id="AK171157">
    <property type="protein sequence ID" value="BAE42281.1"/>
    <property type="molecule type" value="mRNA"/>
</dbReference>
<dbReference type="EMBL" id="BC004709">
    <property type="protein sequence ID" value="AAH04709.1"/>
    <property type="molecule type" value="mRNA"/>
</dbReference>
<dbReference type="CCDS" id="CCDS29339.1"/>
<dbReference type="RefSeq" id="NP_663469.1">
    <property type="nucleotide sequence ID" value="NM_145494.3"/>
</dbReference>
<dbReference type="SMR" id="Q99KE1"/>
<dbReference type="BioGRID" id="223188">
    <property type="interactions" value="4"/>
</dbReference>
<dbReference type="FunCoup" id="Q99KE1">
    <property type="interactions" value="2559"/>
</dbReference>
<dbReference type="IntAct" id="Q99KE1">
    <property type="interactions" value="1"/>
</dbReference>
<dbReference type="STRING" id="10090.ENSMUSP00000025439"/>
<dbReference type="GlyGen" id="Q99KE1">
    <property type="glycosylation" value="1 site, 1 O-linked glycan (1 site)"/>
</dbReference>
<dbReference type="PhosphoSitePlus" id="Q99KE1"/>
<dbReference type="SwissPalm" id="Q99KE1"/>
<dbReference type="REPRODUCTION-2DPAGE" id="Q99KE1"/>
<dbReference type="jPOST" id="Q99KE1"/>
<dbReference type="PaxDb" id="10090-ENSMUSP00000025439"/>
<dbReference type="PeptideAtlas" id="Q99KE1"/>
<dbReference type="ProteomicsDB" id="295813"/>
<dbReference type="Pumba" id="Q99KE1"/>
<dbReference type="Antibodypedia" id="1636">
    <property type="antibodies" value="211 antibodies from 33 providers"/>
</dbReference>
<dbReference type="DNASU" id="107029"/>
<dbReference type="Ensembl" id="ENSMUST00000025439.5">
    <property type="protein sequence ID" value="ENSMUSP00000025439.4"/>
    <property type="gene ID" value="ENSMUSG00000024556.5"/>
</dbReference>
<dbReference type="GeneID" id="107029"/>
<dbReference type="KEGG" id="mmu:107029"/>
<dbReference type="UCSC" id="uc008fox.1">
    <property type="organism name" value="mouse"/>
</dbReference>
<dbReference type="AGR" id="MGI:2147351"/>
<dbReference type="CTD" id="4200"/>
<dbReference type="MGI" id="MGI:2147351">
    <property type="gene designation" value="Me2"/>
</dbReference>
<dbReference type="VEuPathDB" id="HostDB:ENSMUSG00000024556"/>
<dbReference type="eggNOG" id="KOG1257">
    <property type="taxonomic scope" value="Eukaryota"/>
</dbReference>
<dbReference type="GeneTree" id="ENSGT00950000183134"/>
<dbReference type="HOGENOM" id="CLU_011405_5_0_1"/>
<dbReference type="InParanoid" id="Q99KE1"/>
<dbReference type="OMA" id="ANYDTAN"/>
<dbReference type="OrthoDB" id="5365701at2759"/>
<dbReference type="PhylomeDB" id="Q99KE1"/>
<dbReference type="TreeFam" id="TF300537"/>
<dbReference type="BRENDA" id="1.1.1.38">
    <property type="organism ID" value="3474"/>
</dbReference>
<dbReference type="Reactome" id="R-MMU-70268">
    <property type="pathway name" value="Pyruvate metabolism"/>
</dbReference>
<dbReference type="Reactome" id="R-MMU-9837999">
    <property type="pathway name" value="Mitochondrial protein degradation"/>
</dbReference>
<dbReference type="BioGRID-ORCS" id="107029">
    <property type="hits" value="7 hits in 78 CRISPR screens"/>
</dbReference>
<dbReference type="ChiTaRS" id="Me2">
    <property type="organism name" value="mouse"/>
</dbReference>
<dbReference type="PRO" id="PR:Q99KE1"/>
<dbReference type="Proteomes" id="UP000000589">
    <property type="component" value="Chromosome 18"/>
</dbReference>
<dbReference type="RNAct" id="Q99KE1">
    <property type="molecule type" value="protein"/>
</dbReference>
<dbReference type="Bgee" id="ENSMUSG00000024556">
    <property type="expression patterns" value="Expressed in small intestine Peyer's patch and 261 other cell types or tissues"/>
</dbReference>
<dbReference type="GO" id="GO:0005759">
    <property type="term" value="C:mitochondrial matrix"/>
    <property type="evidence" value="ECO:0000314"/>
    <property type="project" value="MGI"/>
</dbReference>
<dbReference type="GO" id="GO:0005739">
    <property type="term" value="C:mitochondrion"/>
    <property type="evidence" value="ECO:0007005"/>
    <property type="project" value="MGI"/>
</dbReference>
<dbReference type="GO" id="GO:0004471">
    <property type="term" value="F:malate dehydrogenase (decarboxylating) (NAD+) activity"/>
    <property type="evidence" value="ECO:0000314"/>
    <property type="project" value="MGI"/>
</dbReference>
<dbReference type="GO" id="GO:0046872">
    <property type="term" value="F:metal ion binding"/>
    <property type="evidence" value="ECO:0007669"/>
    <property type="project" value="UniProtKB-KW"/>
</dbReference>
<dbReference type="GO" id="GO:0051287">
    <property type="term" value="F:NAD binding"/>
    <property type="evidence" value="ECO:0007669"/>
    <property type="project" value="InterPro"/>
</dbReference>
<dbReference type="GO" id="GO:0008948">
    <property type="term" value="F:oxaloacetate decarboxylase activity"/>
    <property type="evidence" value="ECO:0007669"/>
    <property type="project" value="RHEA"/>
</dbReference>
<dbReference type="GO" id="GO:0006090">
    <property type="term" value="P:pyruvate metabolic process"/>
    <property type="evidence" value="ECO:0000314"/>
    <property type="project" value="MGI"/>
</dbReference>
<dbReference type="GO" id="GO:1902031">
    <property type="term" value="P:regulation of NADP metabolic process"/>
    <property type="evidence" value="ECO:0007669"/>
    <property type="project" value="Ensembl"/>
</dbReference>
<dbReference type="CDD" id="cd05312">
    <property type="entry name" value="NAD_bind_1_malic_enz"/>
    <property type="match status" value="1"/>
</dbReference>
<dbReference type="FunFam" id="3.40.50.10380:FF:000006">
    <property type="entry name" value="Malic enzyme"/>
    <property type="match status" value="1"/>
</dbReference>
<dbReference type="FunFam" id="3.40.50.720:FF:000060">
    <property type="entry name" value="Malic enzyme"/>
    <property type="match status" value="1"/>
</dbReference>
<dbReference type="Gene3D" id="3.40.50.10380">
    <property type="entry name" value="Malic enzyme, N-terminal domain"/>
    <property type="match status" value="1"/>
</dbReference>
<dbReference type="Gene3D" id="3.40.50.720">
    <property type="entry name" value="NAD(P)-binding Rossmann-like Domain"/>
    <property type="match status" value="1"/>
</dbReference>
<dbReference type="InterPro" id="IPR046346">
    <property type="entry name" value="Aminoacid_DH-like_N_sf"/>
</dbReference>
<dbReference type="InterPro" id="IPR015884">
    <property type="entry name" value="Malic_enzyme_CS"/>
</dbReference>
<dbReference type="InterPro" id="IPR012301">
    <property type="entry name" value="Malic_N_dom"/>
</dbReference>
<dbReference type="InterPro" id="IPR037062">
    <property type="entry name" value="Malic_N_dom_sf"/>
</dbReference>
<dbReference type="InterPro" id="IPR012302">
    <property type="entry name" value="Malic_NAD-bd"/>
</dbReference>
<dbReference type="InterPro" id="IPR001891">
    <property type="entry name" value="Malic_OxRdtase"/>
</dbReference>
<dbReference type="InterPro" id="IPR036291">
    <property type="entry name" value="NAD(P)-bd_dom_sf"/>
</dbReference>
<dbReference type="NCBIfam" id="NF010052">
    <property type="entry name" value="PRK13529.1"/>
    <property type="match status" value="1"/>
</dbReference>
<dbReference type="PANTHER" id="PTHR23406">
    <property type="entry name" value="MALIC ENZYME-RELATED"/>
    <property type="match status" value="1"/>
</dbReference>
<dbReference type="PANTHER" id="PTHR23406:SF27">
    <property type="entry name" value="NAD-DEPENDENT MALIC ENZYME, MITOCHONDRIAL"/>
    <property type="match status" value="1"/>
</dbReference>
<dbReference type="Pfam" id="PF00390">
    <property type="entry name" value="malic"/>
    <property type="match status" value="1"/>
</dbReference>
<dbReference type="Pfam" id="PF03949">
    <property type="entry name" value="Malic_M"/>
    <property type="match status" value="1"/>
</dbReference>
<dbReference type="PIRSF" id="PIRSF000106">
    <property type="entry name" value="ME"/>
    <property type="match status" value="1"/>
</dbReference>
<dbReference type="PRINTS" id="PR00072">
    <property type="entry name" value="MALOXRDTASE"/>
</dbReference>
<dbReference type="SMART" id="SM01274">
    <property type="entry name" value="malic"/>
    <property type="match status" value="1"/>
</dbReference>
<dbReference type="SMART" id="SM00919">
    <property type="entry name" value="Malic_M"/>
    <property type="match status" value="1"/>
</dbReference>
<dbReference type="SUPFAM" id="SSF53223">
    <property type="entry name" value="Aminoacid dehydrogenase-like, N-terminal domain"/>
    <property type="match status" value="1"/>
</dbReference>
<dbReference type="SUPFAM" id="SSF51735">
    <property type="entry name" value="NAD(P)-binding Rossmann-fold domains"/>
    <property type="match status" value="1"/>
</dbReference>
<dbReference type="PROSITE" id="PS00331">
    <property type="entry name" value="MALIC_ENZYMES"/>
    <property type="match status" value="1"/>
</dbReference>